<comment type="function">
    <text evidence="1">Catalyzes the 2,6-dichlorophenolindophenol-dependent cleavage of acetoin into acetate and acetaldehyde.</text>
</comment>
<comment type="pathway">
    <text>Ketone degradation; acetoin degradation.</text>
</comment>
<comment type="subunit">
    <text evidence="1">Tetramer of 2 alpha and 2 beta subunits.</text>
</comment>
<protein>
    <recommendedName>
        <fullName>Acetoin:2,6-dichlorophenolindophenol oxidoreductase subunit beta</fullName>
        <shortName>Acetoin:DCPIP oxidoreductase-beta</shortName>
        <shortName>Ao:DCPIP OR</shortName>
        <ecNumber>1.1.1.-</ecNumber>
    </recommendedName>
    <alternativeName>
        <fullName>TPP-dependent acetoin dehydrogenase E1 subunit beta</fullName>
    </alternativeName>
</protein>
<sequence>MARVISMSDAINEAMKLAMRKDENVLLIGEDVAGGAAVDHLQDDEAWGGVLGVTKGLVQEFGRTRVLDTPISEAGYMGAAMAAASTGLRPIAELMFNDFIGTCFDQVINQGAKFRYMFGGKAQVPITVRTTYGAGFRAAAQHSQSLYGLFTSIPGLKTVVPSNPYDAKGLLLAAIEDNDPVFFFEDKTSYNMKGEVPEDYYTIPLGKADIKREGNDVTLFAVGKQVNTALEAAAQLSERGIEAEVLDPRSLSPLDEDAIFTSLEKTNRLIIIDEANPRCSIATDIAALVADKGFDLLDAPIKRITAPHTPVPFSPVLEDQYLPTPDKIVSVTLELLGEPALN</sequence>
<accession>O34591</accession>
<dbReference type="EC" id="1.1.1.-"/>
<dbReference type="EMBL" id="AF006075">
    <property type="protein sequence ID" value="AAC05583.1"/>
    <property type="molecule type" value="Genomic_DNA"/>
</dbReference>
<dbReference type="EMBL" id="D78509">
    <property type="protein sequence ID" value="BAA24295.1"/>
    <property type="molecule type" value="Genomic_DNA"/>
</dbReference>
<dbReference type="EMBL" id="AL009126">
    <property type="protein sequence ID" value="CAB12636.1"/>
    <property type="molecule type" value="Genomic_DNA"/>
</dbReference>
<dbReference type="PIR" id="E69581">
    <property type="entry name" value="E69581"/>
</dbReference>
<dbReference type="RefSeq" id="NP_388688.1">
    <property type="nucleotide sequence ID" value="NC_000964.3"/>
</dbReference>
<dbReference type="RefSeq" id="WP_003243124.1">
    <property type="nucleotide sequence ID" value="NZ_OZ025638.1"/>
</dbReference>
<dbReference type="SMR" id="O34591"/>
<dbReference type="FunCoup" id="O34591">
    <property type="interactions" value="285"/>
</dbReference>
<dbReference type="STRING" id="224308.BSU08070"/>
<dbReference type="jPOST" id="O34591"/>
<dbReference type="PaxDb" id="224308-BSU08070"/>
<dbReference type="EnsemblBacteria" id="CAB12636">
    <property type="protein sequence ID" value="CAB12636"/>
    <property type="gene ID" value="BSU_08070"/>
</dbReference>
<dbReference type="GeneID" id="939697"/>
<dbReference type="KEGG" id="bsu:BSU08070"/>
<dbReference type="PATRIC" id="fig|224308.179.peg.873"/>
<dbReference type="eggNOG" id="COG0022">
    <property type="taxonomic scope" value="Bacteria"/>
</dbReference>
<dbReference type="InParanoid" id="O34591"/>
<dbReference type="OrthoDB" id="9771835at2"/>
<dbReference type="PhylomeDB" id="O34591"/>
<dbReference type="BioCyc" id="BSUB:BSU08070-MONOMER"/>
<dbReference type="UniPathway" id="UPA00040"/>
<dbReference type="Proteomes" id="UP000001570">
    <property type="component" value="Chromosome"/>
</dbReference>
<dbReference type="GO" id="GO:0016491">
    <property type="term" value="F:oxidoreductase activity"/>
    <property type="evidence" value="ECO:0007669"/>
    <property type="project" value="UniProtKB-KW"/>
</dbReference>
<dbReference type="GO" id="GO:0045150">
    <property type="term" value="P:acetoin catabolic process"/>
    <property type="evidence" value="ECO:0007669"/>
    <property type="project" value="UniProtKB-UniPathway"/>
</dbReference>
<dbReference type="CDD" id="cd07036">
    <property type="entry name" value="TPP_PYR_E1-PDHc-beta_like"/>
    <property type="match status" value="1"/>
</dbReference>
<dbReference type="FunFam" id="3.40.50.920:FF:000001">
    <property type="entry name" value="Pyruvate dehydrogenase E1 beta subunit"/>
    <property type="match status" value="1"/>
</dbReference>
<dbReference type="FunFam" id="3.40.50.970:FF:000001">
    <property type="entry name" value="Pyruvate dehydrogenase E1 beta subunit"/>
    <property type="match status" value="1"/>
</dbReference>
<dbReference type="Gene3D" id="3.40.50.920">
    <property type="match status" value="1"/>
</dbReference>
<dbReference type="Gene3D" id="3.40.50.970">
    <property type="match status" value="1"/>
</dbReference>
<dbReference type="InterPro" id="IPR029061">
    <property type="entry name" value="THDP-binding"/>
</dbReference>
<dbReference type="InterPro" id="IPR009014">
    <property type="entry name" value="Transketo_C/PFOR_II"/>
</dbReference>
<dbReference type="InterPro" id="IPR005475">
    <property type="entry name" value="Transketolase-like_Pyr-bd"/>
</dbReference>
<dbReference type="InterPro" id="IPR033248">
    <property type="entry name" value="Transketolase_C"/>
</dbReference>
<dbReference type="NCBIfam" id="NF006667">
    <property type="entry name" value="PRK09212.1"/>
    <property type="match status" value="1"/>
</dbReference>
<dbReference type="PANTHER" id="PTHR43257:SF3">
    <property type="entry name" value="ACETOIN:2,6-DICHLOROPHENOLINDOPHENOL OXIDOREDUCTASE SUBUNIT BETA"/>
    <property type="match status" value="1"/>
</dbReference>
<dbReference type="PANTHER" id="PTHR43257">
    <property type="entry name" value="PYRUVATE DEHYDROGENASE E1 COMPONENT BETA SUBUNIT"/>
    <property type="match status" value="1"/>
</dbReference>
<dbReference type="Pfam" id="PF02779">
    <property type="entry name" value="Transket_pyr"/>
    <property type="match status" value="1"/>
</dbReference>
<dbReference type="Pfam" id="PF02780">
    <property type="entry name" value="Transketolase_C"/>
    <property type="match status" value="1"/>
</dbReference>
<dbReference type="SMART" id="SM00861">
    <property type="entry name" value="Transket_pyr"/>
    <property type="match status" value="1"/>
</dbReference>
<dbReference type="SUPFAM" id="SSF52518">
    <property type="entry name" value="Thiamin diphosphate-binding fold (THDP-binding)"/>
    <property type="match status" value="1"/>
</dbReference>
<dbReference type="SUPFAM" id="SSF52922">
    <property type="entry name" value="TK C-terminal domain-like"/>
    <property type="match status" value="1"/>
</dbReference>
<organism>
    <name type="scientific">Bacillus subtilis (strain 168)</name>
    <dbReference type="NCBI Taxonomy" id="224308"/>
    <lineage>
        <taxon>Bacteria</taxon>
        <taxon>Bacillati</taxon>
        <taxon>Bacillota</taxon>
        <taxon>Bacilli</taxon>
        <taxon>Bacillales</taxon>
        <taxon>Bacillaceae</taxon>
        <taxon>Bacillus</taxon>
    </lineage>
</organism>
<reference key="1">
    <citation type="journal article" date="1999" name="J. Bacteriol.">
        <title>Biochemical and molecular characterization of the Bacillus subtilis acetoin catabolic pathway.</title>
        <authorList>
            <person name="Huang M."/>
            <person name="Oppermann-Sanio F.B."/>
            <person name="Steinbuechel A."/>
        </authorList>
    </citation>
    <scope>NUCLEOTIDE SEQUENCE [GENOMIC DNA]</scope>
    <source>
        <strain>168 / ATCC 33234 / DSM 402 / NBRC 111470 / NCIMB 10106</strain>
    </source>
</reference>
<reference key="2">
    <citation type="journal article" date="1996" name="Microbiology">
        <title>Cloning and sequencing of a 40.6 kb segment in the 73 degrees-76 degrees region of the Bacillus subtilis chromosome containing genes for trehalose metabolism and acetoin utilization.</title>
        <authorList>
            <person name="Yamamoto H."/>
            <person name="Uchiyama S."/>
            <person name="Sekiguchi J."/>
        </authorList>
    </citation>
    <scope>NUCLEOTIDE SEQUENCE [GENOMIC DNA]</scope>
    <source>
        <strain>168 / AC327</strain>
    </source>
</reference>
<reference key="3">
    <citation type="journal article" date="1997" name="Nature">
        <title>The complete genome sequence of the Gram-positive bacterium Bacillus subtilis.</title>
        <authorList>
            <person name="Kunst F."/>
            <person name="Ogasawara N."/>
            <person name="Moszer I."/>
            <person name="Albertini A.M."/>
            <person name="Alloni G."/>
            <person name="Azevedo V."/>
            <person name="Bertero M.G."/>
            <person name="Bessieres P."/>
            <person name="Bolotin A."/>
            <person name="Borchert S."/>
            <person name="Borriss R."/>
            <person name="Boursier L."/>
            <person name="Brans A."/>
            <person name="Braun M."/>
            <person name="Brignell S.C."/>
            <person name="Bron S."/>
            <person name="Brouillet S."/>
            <person name="Bruschi C.V."/>
            <person name="Caldwell B."/>
            <person name="Capuano V."/>
            <person name="Carter N.M."/>
            <person name="Choi S.-K."/>
            <person name="Codani J.-J."/>
            <person name="Connerton I.F."/>
            <person name="Cummings N.J."/>
            <person name="Daniel R.A."/>
            <person name="Denizot F."/>
            <person name="Devine K.M."/>
            <person name="Duesterhoeft A."/>
            <person name="Ehrlich S.D."/>
            <person name="Emmerson P.T."/>
            <person name="Entian K.-D."/>
            <person name="Errington J."/>
            <person name="Fabret C."/>
            <person name="Ferrari E."/>
            <person name="Foulger D."/>
            <person name="Fritz C."/>
            <person name="Fujita M."/>
            <person name="Fujita Y."/>
            <person name="Fuma S."/>
            <person name="Galizzi A."/>
            <person name="Galleron N."/>
            <person name="Ghim S.-Y."/>
            <person name="Glaser P."/>
            <person name="Goffeau A."/>
            <person name="Golightly E.J."/>
            <person name="Grandi G."/>
            <person name="Guiseppi G."/>
            <person name="Guy B.J."/>
            <person name="Haga K."/>
            <person name="Haiech J."/>
            <person name="Harwood C.R."/>
            <person name="Henaut A."/>
            <person name="Hilbert H."/>
            <person name="Holsappel S."/>
            <person name="Hosono S."/>
            <person name="Hullo M.-F."/>
            <person name="Itaya M."/>
            <person name="Jones L.-M."/>
            <person name="Joris B."/>
            <person name="Karamata D."/>
            <person name="Kasahara Y."/>
            <person name="Klaerr-Blanchard M."/>
            <person name="Klein C."/>
            <person name="Kobayashi Y."/>
            <person name="Koetter P."/>
            <person name="Koningstein G."/>
            <person name="Krogh S."/>
            <person name="Kumano M."/>
            <person name="Kurita K."/>
            <person name="Lapidus A."/>
            <person name="Lardinois S."/>
            <person name="Lauber J."/>
            <person name="Lazarevic V."/>
            <person name="Lee S.-M."/>
            <person name="Levine A."/>
            <person name="Liu H."/>
            <person name="Masuda S."/>
            <person name="Mauel C."/>
            <person name="Medigue C."/>
            <person name="Medina N."/>
            <person name="Mellado R.P."/>
            <person name="Mizuno M."/>
            <person name="Moestl D."/>
            <person name="Nakai S."/>
            <person name="Noback M."/>
            <person name="Noone D."/>
            <person name="O'Reilly M."/>
            <person name="Ogawa K."/>
            <person name="Ogiwara A."/>
            <person name="Oudega B."/>
            <person name="Park S.-H."/>
            <person name="Parro V."/>
            <person name="Pohl T.M."/>
            <person name="Portetelle D."/>
            <person name="Porwollik S."/>
            <person name="Prescott A.M."/>
            <person name="Presecan E."/>
            <person name="Pujic P."/>
            <person name="Purnelle B."/>
            <person name="Rapoport G."/>
            <person name="Rey M."/>
            <person name="Reynolds S."/>
            <person name="Rieger M."/>
            <person name="Rivolta C."/>
            <person name="Rocha E."/>
            <person name="Roche B."/>
            <person name="Rose M."/>
            <person name="Sadaie Y."/>
            <person name="Sato T."/>
            <person name="Scanlan E."/>
            <person name="Schleich S."/>
            <person name="Schroeter R."/>
            <person name="Scoffone F."/>
            <person name="Sekiguchi J."/>
            <person name="Sekowska A."/>
            <person name="Seror S.J."/>
            <person name="Serror P."/>
            <person name="Shin B.-S."/>
            <person name="Soldo B."/>
            <person name="Sorokin A."/>
            <person name="Tacconi E."/>
            <person name="Takagi T."/>
            <person name="Takahashi H."/>
            <person name="Takemaru K."/>
            <person name="Takeuchi M."/>
            <person name="Tamakoshi A."/>
            <person name="Tanaka T."/>
            <person name="Terpstra P."/>
            <person name="Tognoni A."/>
            <person name="Tosato V."/>
            <person name="Uchiyama S."/>
            <person name="Vandenbol M."/>
            <person name="Vannier F."/>
            <person name="Vassarotti A."/>
            <person name="Viari A."/>
            <person name="Wambutt R."/>
            <person name="Wedler E."/>
            <person name="Wedler H."/>
            <person name="Weitzenegger T."/>
            <person name="Winters P."/>
            <person name="Wipat A."/>
            <person name="Yamamoto H."/>
            <person name="Yamane K."/>
            <person name="Yasumoto K."/>
            <person name="Yata K."/>
            <person name="Yoshida K."/>
            <person name="Yoshikawa H.-F."/>
            <person name="Zumstein E."/>
            <person name="Yoshikawa H."/>
            <person name="Danchin A."/>
        </authorList>
    </citation>
    <scope>NUCLEOTIDE SEQUENCE [LARGE SCALE GENOMIC DNA]</scope>
    <source>
        <strain>168</strain>
    </source>
</reference>
<name>ACOB_BACSU</name>
<feature type="initiator methionine" description="Removed" evidence="1">
    <location>
        <position position="1"/>
    </location>
</feature>
<feature type="chain" id="PRO_0000162309" description="Acetoin:2,6-dichlorophenolindophenol oxidoreductase subunit beta">
    <location>
        <begin position="2"/>
        <end position="342"/>
    </location>
</feature>
<gene>
    <name type="primary">acoB</name>
    <name type="synonym">yfjJ</name>
    <name type="ordered locus">BSU08070</name>
</gene>
<proteinExistence type="inferred from homology"/>
<keyword id="KW-0006">Acetoin catabolism</keyword>
<keyword id="KW-0560">Oxidoreductase</keyword>
<keyword id="KW-1185">Reference proteome</keyword>
<evidence type="ECO:0000250" key="1"/>